<gene>
    <name type="primary">VIII</name>
</gene>
<evidence type="ECO:0000250" key="1"/>
<evidence type="ECO:0000269" key="2">
    <source>
    </source>
</evidence>
<evidence type="ECO:0000305" key="3"/>
<feature type="signal peptide" evidence="2">
    <location>
        <begin position="1"/>
        <end position="23"/>
    </location>
</feature>
<feature type="chain" id="PRO_0000003297" description="Capsid protein G8P">
    <location>
        <begin position="24"/>
        <end position="73"/>
    </location>
</feature>
<feature type="topological domain" description="Periplasmic" evidence="1">
    <location>
        <begin position="24"/>
        <end position="44"/>
    </location>
</feature>
<feature type="transmembrane region" description="Helical" evidence="1">
    <location>
        <begin position="45"/>
        <end position="65"/>
    </location>
</feature>
<feature type="topological domain" description="Cytoplasmic" evidence="1">
    <location>
        <begin position="66"/>
        <end position="73"/>
    </location>
</feature>
<proteinExistence type="evidence at protein level"/>
<accession>P69540</accession>
<accession>P03617</accession>
<reference key="1">
    <citation type="journal article" date="1981" name="Gene">
        <title>Nucleotide sequence and genome organisation of filamentous bacteriophages f1 and fd.</title>
        <authorList>
            <person name="Beck E."/>
            <person name="Zink B."/>
        </authorList>
    </citation>
    <scope>NUCLEOTIDE SEQUENCE [GENOMIC DNA]</scope>
</reference>
<reference key="2">
    <citation type="journal article" date="1980" name="J. Virol.">
        <title>Nucleotide sequences in bacteriophage f1 DNA: nucleotide sequence of genes V, VII, and VIII.</title>
        <authorList>
            <person name="Hill D.F."/>
            <person name="Petersen G.B."/>
        </authorList>
    </citation>
    <scope>NUCLEOTIDE SEQUENCE [GENOMIC DNA]</scope>
</reference>
<reference key="3">
    <citation type="journal article" date="1982" name="J. Virol.">
        <title>Nucleotide sequence of bacteriophage f1 DNA.</title>
        <authorList>
            <person name="Hill D.F."/>
            <person name="Petersen G.B."/>
        </authorList>
    </citation>
    <scope>NUCLEOTIDE SEQUENCE [GENOMIC DNA]</scope>
</reference>
<reference key="4">
    <citation type="journal article" date="1977" name="J. Biol. Chem.">
        <title>Automated sequencing of insoluble peptides using detergent. Bacteriophage f1 coat protein.</title>
        <authorList>
            <person name="Bailey G.S."/>
            <person name="Gillett D."/>
            <person name="Hill D.F."/>
            <person name="Petersen G.B."/>
        </authorList>
    </citation>
    <scope>PROTEIN SEQUENCE OF 24-73</scope>
</reference>
<keyword id="KW-0002">3D-structure</keyword>
<keyword id="KW-0167">Capsid protein</keyword>
<keyword id="KW-0903">Direct protein sequencing</keyword>
<keyword id="KW-1139">Helical capsid protein</keyword>
<keyword id="KW-1043">Host membrane</keyword>
<keyword id="KW-0472">Membrane</keyword>
<keyword id="KW-0732">Signal</keyword>
<keyword id="KW-0812">Transmembrane</keyword>
<keyword id="KW-1133">Transmembrane helix</keyword>
<keyword id="KW-0946">Virion</keyword>
<dbReference type="EMBL" id="V00606">
    <property type="protein sequence ID" value="CAA23871.1"/>
    <property type="molecule type" value="Genomic_DNA"/>
</dbReference>
<dbReference type="EMBL" id="J02450">
    <property type="protein sequence ID" value="AAA32220.1"/>
    <property type="molecule type" value="Genomic_DNA"/>
</dbReference>
<dbReference type="EMBL" id="J02448">
    <property type="protein sequence ID" value="AAA32214.1"/>
    <property type="molecule type" value="Genomic_DNA"/>
</dbReference>
<dbReference type="PIR" id="E04226">
    <property type="entry name" value="VCBPF1"/>
</dbReference>
<dbReference type="RefSeq" id="YP_010775849.1">
    <property type="nucleotide sequence ID" value="NC_075027.1"/>
</dbReference>
<dbReference type="RefSeq" id="YP_010775869.1">
    <property type="nucleotide sequence ID" value="NC_075029.1"/>
</dbReference>
<dbReference type="RefSeq" id="YP_010775879.1">
    <property type="nucleotide sequence ID" value="NC_075030.1"/>
</dbReference>
<dbReference type="RefSeq" id="YP_010775889.1">
    <property type="nucleotide sequence ID" value="NC_075031.1"/>
</dbReference>
<dbReference type="RefSeq" id="YP_010775909.1">
    <property type="nucleotide sequence ID" value="NC_075033.1"/>
</dbReference>
<dbReference type="PDB" id="8B3O">
    <property type="method" value="EM"/>
    <property type="resolution" value="2.97 A"/>
    <property type="chains" value="KKK/LLL/MMM/NNN/OOO/PPP/QQQ/RRR/SSS/TTT/UUU/VVV/WWW/XXX/YYY/ZZZ/aaa/bbb/ccc/ddd/eee/fff/ggg/hhh/iii/jjj/kkk/lll/mmm/nnn=24-73"/>
</dbReference>
<dbReference type="PDB" id="8B3P">
    <property type="method" value="EM"/>
    <property type="resolution" value="2.81 A"/>
    <property type="chains" value="111/222/333/KKK/LLL/MMM/NNN/OOO/PPP/QQQ/RRR/SSS/TTT/UUU/VVV/WWW/XXX/YYY/ZZZ/aaa/bbb/ccc/ddd/eee/fff/ggg/hhh/iii/jjj/kkk=24-73"/>
</dbReference>
<dbReference type="PDB" id="8B3Q">
    <property type="method" value="EM"/>
    <property type="resolution" value="2.58 A"/>
    <property type="chains" value="AAA/AaA/AbA/AcA/AdA/AeA/AfA/AgA/AhA/AiA/AjA/AkA/AlA/AmA/AnA/BBB/BaB/BbB/BcB/BdB/BeB/BfB/BgB/BhB/BiB/BjB/BkB/BlB/BmB/BnB=24-73"/>
</dbReference>
<dbReference type="PDBsum" id="8B3O"/>
<dbReference type="PDBsum" id="8B3P"/>
<dbReference type="PDBsum" id="8B3Q"/>
<dbReference type="BMRB" id="P69540"/>
<dbReference type="EMDB" id="EMD-15831"/>
<dbReference type="EMDB" id="EMD-15832"/>
<dbReference type="EMDB" id="EMD-15833"/>
<dbReference type="SMR" id="P69540"/>
<dbReference type="GeneID" id="80512453"/>
<dbReference type="GeneID" id="80512475"/>
<dbReference type="GeneID" id="80512485"/>
<dbReference type="GeneID" id="80512497"/>
<dbReference type="GeneID" id="80512519"/>
<dbReference type="Proteomes" id="UP000002557">
    <property type="component" value="Genome"/>
</dbReference>
<dbReference type="Proteomes" id="UP000241027">
    <property type="component" value="Genome"/>
</dbReference>
<dbReference type="GO" id="GO:0019029">
    <property type="term" value="C:helical viral capsid"/>
    <property type="evidence" value="ECO:0007669"/>
    <property type="project" value="UniProtKB-KW"/>
</dbReference>
<dbReference type="GO" id="GO:0033644">
    <property type="term" value="C:host cell membrane"/>
    <property type="evidence" value="ECO:0007669"/>
    <property type="project" value="UniProtKB-SubCell"/>
</dbReference>
<dbReference type="GO" id="GO:0016020">
    <property type="term" value="C:membrane"/>
    <property type="evidence" value="ECO:0007669"/>
    <property type="project" value="UniProtKB-KW"/>
</dbReference>
<dbReference type="Gene3D" id="1.20.5.80">
    <property type="match status" value="1"/>
</dbReference>
<dbReference type="InterPro" id="IPR008020">
    <property type="entry name" value="G8P"/>
</dbReference>
<dbReference type="InterPro" id="IPR023390">
    <property type="entry name" value="Phage_M13_G8P_capsid_dom_sf"/>
</dbReference>
<dbReference type="Pfam" id="PF19199">
    <property type="entry name" value="Phage_coatGP8"/>
    <property type="match status" value="1"/>
</dbReference>
<dbReference type="PIRSF" id="PIRSF004117">
    <property type="entry name" value="Phage_coat_B"/>
    <property type="match status" value="1"/>
</dbReference>
<dbReference type="SUPFAM" id="SSF57987">
    <property type="entry name" value="Inovirus (filamentous phage) major coat protein"/>
    <property type="match status" value="1"/>
</dbReference>
<sequence>MKKSLVLKASVAVATLVPMLSFAAEGDDPAKAAFDSLQASATEYIGYAWAMVVVIVGATIGIKLFKKFTSKAS</sequence>
<protein>
    <recommendedName>
        <fullName>Capsid protein G8P</fullName>
    </recommendedName>
    <alternativeName>
        <fullName>Coat protein B</fullName>
    </alternativeName>
    <alternativeName>
        <fullName>Gene 8 protein</fullName>
        <shortName>G8P</shortName>
    </alternativeName>
    <alternativeName>
        <fullName>Major coat protein</fullName>
    </alternativeName>
</protein>
<name>CAPSD_BPF1</name>
<organismHost>
    <name type="scientific">Escherichia coli</name>
    <dbReference type="NCBI Taxonomy" id="562"/>
</organismHost>
<comment type="function">
    <text evidence="1">Self assembles to form a helical capsid wrapping up the viral genomic DNA. The capsid displays a filamentous structure with a length of 760-1950 nm and a width of 6-8 nm. The virion assembly and budding take place at the host inner membrane (By similarity).</text>
</comment>
<comment type="subunit">
    <text evidence="1">Homomultimerizes. There are several thousands of this protein in the phage capsid (By similarity).</text>
</comment>
<comment type="subcellular location">
    <subcellularLocation>
        <location evidence="3">Virion</location>
    </subcellularLocation>
    <subcellularLocation>
        <location>Host membrane</location>
        <topology>Single-pass type I membrane protein</topology>
    </subcellularLocation>
    <text evidence="1">prior to assembly, the major capsid protein is found associated with the bacterial host inner membrane.</text>
</comment>
<comment type="similarity">
    <text evidence="3">Belongs to the inovirus capsid protein family.</text>
</comment>
<organism>
    <name type="scientific">Enterobacteria phage f1</name>
    <name type="common">Bacteriophage f1</name>
    <dbReference type="NCBI Taxonomy" id="10863"/>
    <lineage>
        <taxon>Viruses</taxon>
        <taxon>Monodnaviria</taxon>
        <taxon>Loebvirae</taxon>
        <taxon>Hofneiviricota</taxon>
        <taxon>Faserviricetes</taxon>
        <taxon>Tubulavirales</taxon>
        <taxon>Inoviridae</taxon>
        <taxon>Inovirus</taxon>
        <taxon>Enterobacteria phage M13</taxon>
    </lineage>
</organism>